<feature type="chain" id="PRO_1000069174" description="Proline--tRNA ligase">
    <location>
        <begin position="1"/>
        <end position="572"/>
    </location>
</feature>
<accession>A7FFJ4</accession>
<name>SYP_YERP3</name>
<evidence type="ECO:0000255" key="1">
    <source>
        <dbReference type="HAMAP-Rule" id="MF_01569"/>
    </source>
</evidence>
<protein>
    <recommendedName>
        <fullName evidence="1">Proline--tRNA ligase</fullName>
        <ecNumber evidence="1">6.1.1.15</ecNumber>
    </recommendedName>
    <alternativeName>
        <fullName evidence="1">Prolyl-tRNA synthetase</fullName>
        <shortName evidence="1">ProRS</shortName>
    </alternativeName>
</protein>
<proteinExistence type="inferred from homology"/>
<organism>
    <name type="scientific">Yersinia pseudotuberculosis serotype O:1b (strain IP 31758)</name>
    <dbReference type="NCBI Taxonomy" id="349747"/>
    <lineage>
        <taxon>Bacteria</taxon>
        <taxon>Pseudomonadati</taxon>
        <taxon>Pseudomonadota</taxon>
        <taxon>Gammaproteobacteria</taxon>
        <taxon>Enterobacterales</taxon>
        <taxon>Yersiniaceae</taxon>
        <taxon>Yersinia</taxon>
    </lineage>
</organism>
<keyword id="KW-0030">Aminoacyl-tRNA synthetase</keyword>
<keyword id="KW-0067">ATP-binding</keyword>
<keyword id="KW-0963">Cytoplasm</keyword>
<keyword id="KW-0436">Ligase</keyword>
<keyword id="KW-0547">Nucleotide-binding</keyword>
<keyword id="KW-0648">Protein biosynthesis</keyword>
<sequence>MRTSQYLLSTQKETPADAEVISHQLMLRAGMIRKLASGLYTWLPTGVRVLKKVENIVREEMNNAGAIEVSMPVVQPADLWQESGRWEQYGPELLRFVDRGERPFVLGPTHEEVITDLIRGEINSYKQLPLNFFQIQTKFRDEVRPRFGVMRAREFLMKDAYSFHTTQESLQETYDAMYTAYSKIFSRMDLNFRAVLADTGSIGGSASHEFQVLAESGEDDIVFSTGSDYAANIEFAEALAPTEPRAPATEELRIVDTPNAKTIAELVEQFKLPIEKTVKTLLVHAHEESGHKLVALLVRGDHDLNEIKAEKLPQVAKPLTFASEEEIRAAIGAGPGSLGPVNLSLPVIADRSVAVMSDFGAGANIDGKHYFGINWERDLALPLVADLRNVVEGDISPDGKGTLQIKRGIEVGHIFQLGTKYSEAMKATVQGEDGRNQVMTMGCYGIGVSRVVAAAIEQNHDDRGIIWPDAIAPFQVAILPMNMHKSFRVKELAEELYTTLRSHGIDVILDDRKERPGVMFADMELIGVPHNIVIGDRNLDSEEVEYKNRRVGEKQMIKTSEIVEFLLSQIKR</sequence>
<reference key="1">
    <citation type="journal article" date="2007" name="PLoS Genet.">
        <title>The complete genome sequence of Yersinia pseudotuberculosis IP31758, the causative agent of Far East scarlet-like fever.</title>
        <authorList>
            <person name="Eppinger M."/>
            <person name="Rosovitz M.J."/>
            <person name="Fricke W.F."/>
            <person name="Rasko D.A."/>
            <person name="Kokorina G."/>
            <person name="Fayolle C."/>
            <person name="Lindler L.E."/>
            <person name="Carniel E."/>
            <person name="Ravel J."/>
        </authorList>
    </citation>
    <scope>NUCLEOTIDE SEQUENCE [LARGE SCALE GENOMIC DNA]</scope>
    <source>
        <strain>IP 31758</strain>
    </source>
</reference>
<dbReference type="EC" id="6.1.1.15" evidence="1"/>
<dbReference type="EMBL" id="CP000720">
    <property type="protein sequence ID" value="ABS46680.1"/>
    <property type="molecule type" value="Genomic_DNA"/>
</dbReference>
<dbReference type="RefSeq" id="WP_012104744.1">
    <property type="nucleotide sequence ID" value="NC_009708.1"/>
</dbReference>
<dbReference type="SMR" id="A7FFJ4"/>
<dbReference type="GeneID" id="49785003"/>
<dbReference type="KEGG" id="ypi:YpsIP31758_1038"/>
<dbReference type="HOGENOM" id="CLU_016739_0_0_6"/>
<dbReference type="Proteomes" id="UP000002412">
    <property type="component" value="Chromosome"/>
</dbReference>
<dbReference type="GO" id="GO:0005829">
    <property type="term" value="C:cytosol"/>
    <property type="evidence" value="ECO:0007669"/>
    <property type="project" value="TreeGrafter"/>
</dbReference>
<dbReference type="GO" id="GO:0002161">
    <property type="term" value="F:aminoacyl-tRNA deacylase activity"/>
    <property type="evidence" value="ECO:0007669"/>
    <property type="project" value="InterPro"/>
</dbReference>
<dbReference type="GO" id="GO:0005524">
    <property type="term" value="F:ATP binding"/>
    <property type="evidence" value="ECO:0007669"/>
    <property type="project" value="UniProtKB-UniRule"/>
</dbReference>
<dbReference type="GO" id="GO:0004827">
    <property type="term" value="F:proline-tRNA ligase activity"/>
    <property type="evidence" value="ECO:0007669"/>
    <property type="project" value="UniProtKB-UniRule"/>
</dbReference>
<dbReference type="GO" id="GO:0006433">
    <property type="term" value="P:prolyl-tRNA aminoacylation"/>
    <property type="evidence" value="ECO:0007669"/>
    <property type="project" value="UniProtKB-UniRule"/>
</dbReference>
<dbReference type="CDD" id="cd04334">
    <property type="entry name" value="ProRS-INS"/>
    <property type="match status" value="1"/>
</dbReference>
<dbReference type="CDD" id="cd00861">
    <property type="entry name" value="ProRS_anticodon_short"/>
    <property type="match status" value="1"/>
</dbReference>
<dbReference type="CDD" id="cd00779">
    <property type="entry name" value="ProRS_core_prok"/>
    <property type="match status" value="1"/>
</dbReference>
<dbReference type="FunFam" id="3.30.930.10:FF:000012">
    <property type="entry name" value="Proline--tRNA ligase"/>
    <property type="match status" value="1"/>
</dbReference>
<dbReference type="FunFam" id="3.30.930.10:FF:000097">
    <property type="entry name" value="Proline--tRNA ligase"/>
    <property type="match status" value="1"/>
</dbReference>
<dbReference type="FunFam" id="3.40.50.800:FF:000006">
    <property type="entry name" value="Proline--tRNA ligase"/>
    <property type="match status" value="1"/>
</dbReference>
<dbReference type="FunFam" id="3.90.960.10:FF:000001">
    <property type="entry name" value="Proline--tRNA ligase"/>
    <property type="match status" value="1"/>
</dbReference>
<dbReference type="Gene3D" id="3.40.50.800">
    <property type="entry name" value="Anticodon-binding domain"/>
    <property type="match status" value="1"/>
</dbReference>
<dbReference type="Gene3D" id="3.30.930.10">
    <property type="entry name" value="Bira Bifunctional Protein, Domain 2"/>
    <property type="match status" value="2"/>
</dbReference>
<dbReference type="Gene3D" id="3.90.960.10">
    <property type="entry name" value="YbaK/aminoacyl-tRNA synthetase-associated domain"/>
    <property type="match status" value="1"/>
</dbReference>
<dbReference type="HAMAP" id="MF_01569">
    <property type="entry name" value="Pro_tRNA_synth_type1"/>
    <property type="match status" value="1"/>
</dbReference>
<dbReference type="InterPro" id="IPR002314">
    <property type="entry name" value="aa-tRNA-synt_IIb"/>
</dbReference>
<dbReference type="InterPro" id="IPR006195">
    <property type="entry name" value="aa-tRNA-synth_II"/>
</dbReference>
<dbReference type="InterPro" id="IPR045864">
    <property type="entry name" value="aa-tRNA-synth_II/BPL/LPL"/>
</dbReference>
<dbReference type="InterPro" id="IPR004154">
    <property type="entry name" value="Anticodon-bd"/>
</dbReference>
<dbReference type="InterPro" id="IPR036621">
    <property type="entry name" value="Anticodon-bd_dom_sf"/>
</dbReference>
<dbReference type="InterPro" id="IPR002316">
    <property type="entry name" value="Pro-tRNA-ligase_IIa"/>
</dbReference>
<dbReference type="InterPro" id="IPR004500">
    <property type="entry name" value="Pro-tRNA-synth_IIa_bac-type"/>
</dbReference>
<dbReference type="InterPro" id="IPR023717">
    <property type="entry name" value="Pro-tRNA-Synthase_IIa_type1"/>
</dbReference>
<dbReference type="InterPro" id="IPR050062">
    <property type="entry name" value="Pro-tRNA_synthetase"/>
</dbReference>
<dbReference type="InterPro" id="IPR044140">
    <property type="entry name" value="ProRS_anticodon_short"/>
</dbReference>
<dbReference type="InterPro" id="IPR033730">
    <property type="entry name" value="ProRS_core_prok"/>
</dbReference>
<dbReference type="InterPro" id="IPR036754">
    <property type="entry name" value="YbaK/aa-tRNA-synt-asso_dom_sf"/>
</dbReference>
<dbReference type="InterPro" id="IPR007214">
    <property type="entry name" value="YbaK/aa-tRNA-synth-assoc-dom"/>
</dbReference>
<dbReference type="NCBIfam" id="NF006625">
    <property type="entry name" value="PRK09194.1"/>
    <property type="match status" value="1"/>
</dbReference>
<dbReference type="NCBIfam" id="TIGR00409">
    <property type="entry name" value="proS_fam_II"/>
    <property type="match status" value="1"/>
</dbReference>
<dbReference type="PANTHER" id="PTHR42753">
    <property type="entry name" value="MITOCHONDRIAL RIBOSOME PROTEIN L39/PROLYL-TRNA LIGASE FAMILY MEMBER"/>
    <property type="match status" value="1"/>
</dbReference>
<dbReference type="PANTHER" id="PTHR42753:SF2">
    <property type="entry name" value="PROLINE--TRNA LIGASE"/>
    <property type="match status" value="1"/>
</dbReference>
<dbReference type="Pfam" id="PF03129">
    <property type="entry name" value="HGTP_anticodon"/>
    <property type="match status" value="1"/>
</dbReference>
<dbReference type="Pfam" id="PF00587">
    <property type="entry name" value="tRNA-synt_2b"/>
    <property type="match status" value="1"/>
</dbReference>
<dbReference type="Pfam" id="PF04073">
    <property type="entry name" value="tRNA_edit"/>
    <property type="match status" value="1"/>
</dbReference>
<dbReference type="PIRSF" id="PIRSF001535">
    <property type="entry name" value="ProRS_1"/>
    <property type="match status" value="1"/>
</dbReference>
<dbReference type="PRINTS" id="PR01046">
    <property type="entry name" value="TRNASYNTHPRO"/>
</dbReference>
<dbReference type="SUPFAM" id="SSF52954">
    <property type="entry name" value="Class II aaRS ABD-related"/>
    <property type="match status" value="1"/>
</dbReference>
<dbReference type="SUPFAM" id="SSF55681">
    <property type="entry name" value="Class II aaRS and biotin synthetases"/>
    <property type="match status" value="1"/>
</dbReference>
<dbReference type="SUPFAM" id="SSF55826">
    <property type="entry name" value="YbaK/ProRS associated domain"/>
    <property type="match status" value="1"/>
</dbReference>
<dbReference type="PROSITE" id="PS50862">
    <property type="entry name" value="AA_TRNA_LIGASE_II"/>
    <property type="match status" value="1"/>
</dbReference>
<gene>
    <name evidence="1" type="primary">proS</name>
    <name type="ordered locus">YpsIP31758_1038</name>
</gene>
<comment type="function">
    <text evidence="1">Catalyzes the attachment of proline to tRNA(Pro) in a two-step reaction: proline is first activated by ATP to form Pro-AMP and then transferred to the acceptor end of tRNA(Pro). As ProRS can inadvertently accommodate and process non-cognate amino acids such as alanine and cysteine, to avoid such errors it has two additional distinct editing activities against alanine. One activity is designated as 'pretransfer' editing and involves the tRNA(Pro)-independent hydrolysis of activated Ala-AMP. The other activity is designated 'posttransfer' editing and involves deacylation of mischarged Ala-tRNA(Pro). The misacylated Cys-tRNA(Pro) is not edited by ProRS.</text>
</comment>
<comment type="catalytic activity">
    <reaction evidence="1">
        <text>tRNA(Pro) + L-proline + ATP = L-prolyl-tRNA(Pro) + AMP + diphosphate</text>
        <dbReference type="Rhea" id="RHEA:14305"/>
        <dbReference type="Rhea" id="RHEA-COMP:9700"/>
        <dbReference type="Rhea" id="RHEA-COMP:9702"/>
        <dbReference type="ChEBI" id="CHEBI:30616"/>
        <dbReference type="ChEBI" id="CHEBI:33019"/>
        <dbReference type="ChEBI" id="CHEBI:60039"/>
        <dbReference type="ChEBI" id="CHEBI:78442"/>
        <dbReference type="ChEBI" id="CHEBI:78532"/>
        <dbReference type="ChEBI" id="CHEBI:456215"/>
        <dbReference type="EC" id="6.1.1.15"/>
    </reaction>
</comment>
<comment type="subunit">
    <text evidence="1">Homodimer.</text>
</comment>
<comment type="subcellular location">
    <subcellularLocation>
        <location evidence="1">Cytoplasm</location>
    </subcellularLocation>
</comment>
<comment type="domain">
    <text evidence="1">Consists of three domains: the N-terminal catalytic domain, the editing domain and the C-terminal anticodon-binding domain.</text>
</comment>
<comment type="similarity">
    <text evidence="1">Belongs to the class-II aminoacyl-tRNA synthetase family. ProS type 1 subfamily.</text>
</comment>